<gene>
    <name evidence="1" type="primary">hisE</name>
    <name type="ordered locus">lp_2552</name>
</gene>
<name>HIS2_LACPL</name>
<keyword id="KW-0028">Amino-acid biosynthesis</keyword>
<keyword id="KW-0067">ATP-binding</keyword>
<keyword id="KW-0963">Cytoplasm</keyword>
<keyword id="KW-0368">Histidine biosynthesis</keyword>
<keyword id="KW-0378">Hydrolase</keyword>
<keyword id="KW-0547">Nucleotide-binding</keyword>
<keyword id="KW-1185">Reference proteome</keyword>
<feature type="chain" id="PRO_0000136363" description="Phosphoribosyl-ATP pyrophosphatase">
    <location>
        <begin position="1"/>
        <end position="106"/>
    </location>
</feature>
<sequence length="106" mass="12241">MQNMEELYELIKQRKATPKKGSYTDYLFTKGLDKILKKVGEESTEVIVAAKNPGDDELTYETADLLYHVLVLLVERGVSFDQIKQELAKREGKMSDYKDRPEIKNL</sequence>
<organism>
    <name type="scientific">Lactiplantibacillus plantarum (strain ATCC BAA-793 / NCIMB 8826 / WCFS1)</name>
    <name type="common">Lactobacillus plantarum</name>
    <dbReference type="NCBI Taxonomy" id="220668"/>
    <lineage>
        <taxon>Bacteria</taxon>
        <taxon>Bacillati</taxon>
        <taxon>Bacillota</taxon>
        <taxon>Bacilli</taxon>
        <taxon>Lactobacillales</taxon>
        <taxon>Lactobacillaceae</taxon>
        <taxon>Lactiplantibacillus</taxon>
    </lineage>
</organism>
<accession>Q88UE5</accession>
<accession>F9UR69</accession>
<protein>
    <recommendedName>
        <fullName evidence="1">Phosphoribosyl-ATP pyrophosphatase</fullName>
        <shortName evidence="1">PRA-PH</shortName>
        <ecNumber evidence="1">3.6.1.31</ecNumber>
    </recommendedName>
</protein>
<dbReference type="EC" id="3.6.1.31" evidence="1"/>
<dbReference type="EMBL" id="AL935263">
    <property type="protein sequence ID" value="CCC79708.1"/>
    <property type="molecule type" value="Genomic_DNA"/>
</dbReference>
<dbReference type="RefSeq" id="WP_003642719.1">
    <property type="nucleotide sequence ID" value="NC_004567.2"/>
</dbReference>
<dbReference type="RefSeq" id="YP_004890222.1">
    <property type="nucleotide sequence ID" value="NC_004567.2"/>
</dbReference>
<dbReference type="SMR" id="Q88UE5"/>
<dbReference type="STRING" id="220668.lp_2552"/>
<dbReference type="EnsemblBacteria" id="CCC79708">
    <property type="protein sequence ID" value="CCC79708"/>
    <property type="gene ID" value="lp_2552"/>
</dbReference>
<dbReference type="GeneID" id="89669835"/>
<dbReference type="KEGG" id="lpl:lp_2552"/>
<dbReference type="PATRIC" id="fig|220668.9.peg.2144"/>
<dbReference type="eggNOG" id="COG0140">
    <property type="taxonomic scope" value="Bacteria"/>
</dbReference>
<dbReference type="HOGENOM" id="CLU_123337_0_0_9"/>
<dbReference type="OrthoDB" id="9795769at2"/>
<dbReference type="PhylomeDB" id="Q88UE5"/>
<dbReference type="UniPathway" id="UPA00031">
    <property type="reaction ID" value="UER00007"/>
</dbReference>
<dbReference type="Proteomes" id="UP000000432">
    <property type="component" value="Chromosome"/>
</dbReference>
<dbReference type="GO" id="GO:0005737">
    <property type="term" value="C:cytoplasm"/>
    <property type="evidence" value="ECO:0007669"/>
    <property type="project" value="UniProtKB-SubCell"/>
</dbReference>
<dbReference type="GO" id="GO:0005524">
    <property type="term" value="F:ATP binding"/>
    <property type="evidence" value="ECO:0007669"/>
    <property type="project" value="UniProtKB-KW"/>
</dbReference>
<dbReference type="GO" id="GO:0004636">
    <property type="term" value="F:phosphoribosyl-ATP diphosphatase activity"/>
    <property type="evidence" value="ECO:0007669"/>
    <property type="project" value="UniProtKB-UniRule"/>
</dbReference>
<dbReference type="GO" id="GO:0000105">
    <property type="term" value="P:L-histidine biosynthetic process"/>
    <property type="evidence" value="ECO:0007669"/>
    <property type="project" value="UniProtKB-UniRule"/>
</dbReference>
<dbReference type="CDD" id="cd11534">
    <property type="entry name" value="NTP-PPase_HisIE_like"/>
    <property type="match status" value="1"/>
</dbReference>
<dbReference type="FunFam" id="1.10.287.1080:FF:000002">
    <property type="entry name" value="Histidine biosynthesis bifunctional protein HisIE"/>
    <property type="match status" value="1"/>
</dbReference>
<dbReference type="Gene3D" id="1.10.287.1080">
    <property type="entry name" value="MazG-like"/>
    <property type="match status" value="1"/>
</dbReference>
<dbReference type="HAMAP" id="MF_01020">
    <property type="entry name" value="HisE"/>
    <property type="match status" value="1"/>
</dbReference>
<dbReference type="InterPro" id="IPR008179">
    <property type="entry name" value="HisE"/>
</dbReference>
<dbReference type="InterPro" id="IPR021130">
    <property type="entry name" value="PRib-ATP_PPHydrolase-like"/>
</dbReference>
<dbReference type="NCBIfam" id="TIGR03188">
    <property type="entry name" value="histidine_hisI"/>
    <property type="match status" value="1"/>
</dbReference>
<dbReference type="PANTHER" id="PTHR42945">
    <property type="entry name" value="HISTIDINE BIOSYNTHESIS BIFUNCTIONAL PROTEIN"/>
    <property type="match status" value="1"/>
</dbReference>
<dbReference type="PANTHER" id="PTHR42945:SF9">
    <property type="entry name" value="HISTIDINE BIOSYNTHESIS BIFUNCTIONAL PROTEIN HISIE"/>
    <property type="match status" value="1"/>
</dbReference>
<dbReference type="Pfam" id="PF01503">
    <property type="entry name" value="PRA-PH"/>
    <property type="match status" value="1"/>
</dbReference>
<dbReference type="SUPFAM" id="SSF101386">
    <property type="entry name" value="all-alpha NTP pyrophosphatases"/>
    <property type="match status" value="1"/>
</dbReference>
<proteinExistence type="inferred from homology"/>
<evidence type="ECO:0000255" key="1">
    <source>
        <dbReference type="HAMAP-Rule" id="MF_01020"/>
    </source>
</evidence>
<comment type="catalytic activity">
    <reaction evidence="1">
        <text>1-(5-phospho-beta-D-ribosyl)-ATP + H2O = 1-(5-phospho-beta-D-ribosyl)-5'-AMP + diphosphate + H(+)</text>
        <dbReference type="Rhea" id="RHEA:22828"/>
        <dbReference type="ChEBI" id="CHEBI:15377"/>
        <dbReference type="ChEBI" id="CHEBI:15378"/>
        <dbReference type="ChEBI" id="CHEBI:33019"/>
        <dbReference type="ChEBI" id="CHEBI:59457"/>
        <dbReference type="ChEBI" id="CHEBI:73183"/>
        <dbReference type="EC" id="3.6.1.31"/>
    </reaction>
</comment>
<comment type="pathway">
    <text evidence="1">Amino-acid biosynthesis; L-histidine biosynthesis; L-histidine from 5-phospho-alpha-D-ribose 1-diphosphate: step 2/9.</text>
</comment>
<comment type="subcellular location">
    <subcellularLocation>
        <location evidence="1">Cytoplasm</location>
    </subcellularLocation>
</comment>
<comment type="similarity">
    <text evidence="1">Belongs to the PRA-PH family.</text>
</comment>
<reference key="1">
    <citation type="journal article" date="2003" name="Proc. Natl. Acad. Sci. U.S.A.">
        <title>Complete genome sequence of Lactobacillus plantarum WCFS1.</title>
        <authorList>
            <person name="Kleerebezem M."/>
            <person name="Boekhorst J."/>
            <person name="van Kranenburg R."/>
            <person name="Molenaar D."/>
            <person name="Kuipers O.P."/>
            <person name="Leer R."/>
            <person name="Tarchini R."/>
            <person name="Peters S.A."/>
            <person name="Sandbrink H.M."/>
            <person name="Fiers M.W.E.J."/>
            <person name="Stiekema W."/>
            <person name="Klein Lankhorst R.M."/>
            <person name="Bron P.A."/>
            <person name="Hoffer S.M."/>
            <person name="Nierop Groot M.N."/>
            <person name="Kerkhoven R."/>
            <person name="De Vries M."/>
            <person name="Ursing B."/>
            <person name="De Vos W.M."/>
            <person name="Siezen R.J."/>
        </authorList>
    </citation>
    <scope>NUCLEOTIDE SEQUENCE [LARGE SCALE GENOMIC DNA]</scope>
    <source>
        <strain>ATCC BAA-793 / NCIMB 8826 / WCFS1</strain>
    </source>
</reference>
<reference key="2">
    <citation type="journal article" date="2012" name="J. Bacteriol.">
        <title>Complete resequencing and reannotation of the Lactobacillus plantarum WCFS1 genome.</title>
        <authorList>
            <person name="Siezen R.J."/>
            <person name="Francke C."/>
            <person name="Renckens B."/>
            <person name="Boekhorst J."/>
            <person name="Wels M."/>
            <person name="Kleerebezem M."/>
            <person name="van Hijum S.A."/>
        </authorList>
    </citation>
    <scope>NUCLEOTIDE SEQUENCE [LARGE SCALE GENOMIC DNA]</scope>
    <scope>GENOME REANNOTATION</scope>
    <source>
        <strain>ATCC BAA-793 / NCIMB 8826 / WCFS1</strain>
    </source>
</reference>